<feature type="chain" id="PRO_0000108854" description="Phospho-N-acetylmuramoyl-pentapeptide-transferase">
    <location>
        <begin position="1"/>
        <end position="359"/>
    </location>
</feature>
<feature type="transmembrane region" description="Helical" evidence="1">
    <location>
        <begin position="3"/>
        <end position="23"/>
    </location>
</feature>
<feature type="transmembrane region" description="Helical" evidence="1">
    <location>
        <begin position="55"/>
        <end position="75"/>
    </location>
</feature>
<feature type="transmembrane region" description="Helical" evidence="1">
    <location>
        <begin position="80"/>
        <end position="100"/>
    </location>
</feature>
<feature type="transmembrane region" description="Helical" evidence="1">
    <location>
        <begin position="117"/>
        <end position="137"/>
    </location>
</feature>
<feature type="transmembrane region" description="Helical" evidence="1">
    <location>
        <begin position="156"/>
        <end position="176"/>
    </location>
</feature>
<feature type="transmembrane region" description="Helical" evidence="1">
    <location>
        <begin position="187"/>
        <end position="207"/>
    </location>
</feature>
<feature type="transmembrane region" description="Helical" evidence="1">
    <location>
        <begin position="231"/>
        <end position="251"/>
    </location>
</feature>
<feature type="transmembrane region" description="Helical" evidence="1">
    <location>
        <begin position="255"/>
        <end position="275"/>
    </location>
</feature>
<feature type="transmembrane region" description="Helical" evidence="1">
    <location>
        <begin position="280"/>
        <end position="300"/>
    </location>
</feature>
<feature type="transmembrane region" description="Helical" evidence="1">
    <location>
        <begin position="334"/>
        <end position="354"/>
    </location>
</feature>
<sequence length="359" mass="37773">MRQILVAVTVALVVSILLTPALIRLFTRHGFGQEIREDGPPSHHNKRGTPSMGGVAIVAGIWAGYLGTHLAGLAFDGEGVSASGVLVLGLATALGGVGFLDDLIKIRRSRNLGLNKTAKTVGQITAAVLFGVLVLQFRNGAGLTPASADLSYVREIATVTLAPALFVLFCMVIVSAWSNAVNFTDGLDGLAAGSMAMVTAAYVLITFWQYRNACVTAPGLGCYNVRDPLDLTLIAAATVGACIGFLWWNAAPAKIFMGDTGSLALGGVIAGLSVTSRTEILAVVLGSLFVAEITSVVLQILAFRTTGRRVFRMAPFHHHFELAGWAETTVIIRFWLLTAIACGLGVVLFYGEWLATIGA</sequence>
<reference key="1">
    <citation type="journal article" date="2001" name="Nature">
        <title>Massive gene decay in the leprosy bacillus.</title>
        <authorList>
            <person name="Cole S.T."/>
            <person name="Eiglmeier K."/>
            <person name="Parkhill J."/>
            <person name="James K.D."/>
            <person name="Thomson N.R."/>
            <person name="Wheeler P.R."/>
            <person name="Honore N."/>
            <person name="Garnier T."/>
            <person name="Churcher C.M."/>
            <person name="Harris D.E."/>
            <person name="Mungall K.L."/>
            <person name="Basham D."/>
            <person name="Brown D."/>
            <person name="Chillingworth T."/>
            <person name="Connor R."/>
            <person name="Davies R.M."/>
            <person name="Devlin K."/>
            <person name="Duthoy S."/>
            <person name="Feltwell T."/>
            <person name="Fraser A."/>
            <person name="Hamlin N."/>
            <person name="Holroyd S."/>
            <person name="Hornsby T."/>
            <person name="Jagels K."/>
            <person name="Lacroix C."/>
            <person name="Maclean J."/>
            <person name="Moule S."/>
            <person name="Murphy L.D."/>
            <person name="Oliver K."/>
            <person name="Quail M.A."/>
            <person name="Rajandream M.A."/>
            <person name="Rutherford K.M."/>
            <person name="Rutter S."/>
            <person name="Seeger K."/>
            <person name="Simon S."/>
            <person name="Simmonds M."/>
            <person name="Skelton J."/>
            <person name="Squares R."/>
            <person name="Squares S."/>
            <person name="Stevens K."/>
            <person name="Taylor K."/>
            <person name="Whitehead S."/>
            <person name="Woodward J.R."/>
            <person name="Barrell B.G."/>
        </authorList>
    </citation>
    <scope>NUCLEOTIDE SEQUENCE [LARGE SCALE GENOMIC DNA]</scope>
    <source>
        <strain>TN</strain>
    </source>
</reference>
<evidence type="ECO:0000255" key="1">
    <source>
        <dbReference type="HAMAP-Rule" id="MF_00038"/>
    </source>
</evidence>
<protein>
    <recommendedName>
        <fullName evidence="1">Phospho-N-acetylmuramoyl-pentapeptide-transferase</fullName>
        <ecNumber evidence="1">2.7.8.13</ecNumber>
    </recommendedName>
    <alternativeName>
        <fullName evidence="1">UDP-MurNAc-pentapeptide phosphotransferase</fullName>
    </alternativeName>
</protein>
<accession>O69555</accession>
<name>MRAY_MYCLE</name>
<keyword id="KW-0131">Cell cycle</keyword>
<keyword id="KW-0132">Cell division</keyword>
<keyword id="KW-1003">Cell membrane</keyword>
<keyword id="KW-0133">Cell shape</keyword>
<keyword id="KW-0961">Cell wall biogenesis/degradation</keyword>
<keyword id="KW-0460">Magnesium</keyword>
<keyword id="KW-0472">Membrane</keyword>
<keyword id="KW-0479">Metal-binding</keyword>
<keyword id="KW-0573">Peptidoglycan synthesis</keyword>
<keyword id="KW-1185">Reference proteome</keyword>
<keyword id="KW-0808">Transferase</keyword>
<keyword id="KW-0812">Transmembrane</keyword>
<keyword id="KW-1133">Transmembrane helix</keyword>
<gene>
    <name evidence="1" type="primary">mraY</name>
    <name type="synonym">murX</name>
    <name type="ordered locus">ML0911</name>
    <name type="ORF">MLCB268.05c</name>
</gene>
<comment type="function">
    <text evidence="1">Catalyzes the initial step of the lipid cycle reactions in the biosynthesis of the cell wall peptidoglycan: transfers peptidoglycan precursor phospho-MurNAc-pentapeptide from UDP-MurNAc-pentapeptide onto the lipid carrier undecaprenyl phosphate, yielding undecaprenyl-pyrophosphoryl-MurNAc-pentapeptide, known as lipid I.</text>
</comment>
<comment type="catalytic activity">
    <reaction evidence="1">
        <text>UDP-N-acetyl-alpha-D-muramoyl-L-alanyl-gamma-D-glutamyl-meso-2,6-diaminopimeloyl-D-alanyl-D-alanine + di-trans,octa-cis-undecaprenyl phosphate = di-trans,octa-cis-undecaprenyl diphospho-N-acetyl-alpha-D-muramoyl-L-alanyl-D-glutamyl-meso-2,6-diaminopimeloyl-D-alanyl-D-alanine + UMP</text>
        <dbReference type="Rhea" id="RHEA:28386"/>
        <dbReference type="ChEBI" id="CHEBI:57865"/>
        <dbReference type="ChEBI" id="CHEBI:60392"/>
        <dbReference type="ChEBI" id="CHEBI:61386"/>
        <dbReference type="ChEBI" id="CHEBI:61387"/>
        <dbReference type="EC" id="2.7.8.13"/>
    </reaction>
</comment>
<comment type="cofactor">
    <cofactor evidence="1">
        <name>Mg(2+)</name>
        <dbReference type="ChEBI" id="CHEBI:18420"/>
    </cofactor>
</comment>
<comment type="pathway">
    <text evidence="1">Cell wall biogenesis; peptidoglycan biosynthesis.</text>
</comment>
<comment type="subcellular location">
    <subcellularLocation>
        <location evidence="1">Cell membrane</location>
        <topology evidence="1">Multi-pass membrane protein</topology>
    </subcellularLocation>
</comment>
<comment type="similarity">
    <text evidence="1">Belongs to the glycosyltransferase 4 family. MraY subfamily.</text>
</comment>
<dbReference type="EC" id="2.7.8.13" evidence="1"/>
<dbReference type="EMBL" id="AL022602">
    <property type="protein sequence ID" value="CAA18671.1"/>
    <property type="molecule type" value="Genomic_DNA"/>
</dbReference>
<dbReference type="EMBL" id="AL583920">
    <property type="protein sequence ID" value="CAC31292.1"/>
    <property type="molecule type" value="Genomic_DNA"/>
</dbReference>
<dbReference type="PIR" id="A87023">
    <property type="entry name" value="A87023"/>
</dbReference>
<dbReference type="RefSeq" id="NP_301694.1">
    <property type="nucleotide sequence ID" value="NC_002677.1"/>
</dbReference>
<dbReference type="RefSeq" id="WP_010908018.1">
    <property type="nucleotide sequence ID" value="NC_002677.1"/>
</dbReference>
<dbReference type="SMR" id="O69555"/>
<dbReference type="STRING" id="272631.gene:17574737"/>
<dbReference type="KEGG" id="mle:ML0911"/>
<dbReference type="PATRIC" id="fig|272631.5.peg.1654"/>
<dbReference type="Leproma" id="ML0911"/>
<dbReference type="eggNOG" id="COG0472">
    <property type="taxonomic scope" value="Bacteria"/>
</dbReference>
<dbReference type="HOGENOM" id="CLU_023982_0_1_11"/>
<dbReference type="OrthoDB" id="9805475at2"/>
<dbReference type="UniPathway" id="UPA00219"/>
<dbReference type="Proteomes" id="UP000000806">
    <property type="component" value="Chromosome"/>
</dbReference>
<dbReference type="GO" id="GO:0005886">
    <property type="term" value="C:plasma membrane"/>
    <property type="evidence" value="ECO:0007669"/>
    <property type="project" value="UniProtKB-SubCell"/>
</dbReference>
<dbReference type="GO" id="GO:0046872">
    <property type="term" value="F:metal ion binding"/>
    <property type="evidence" value="ECO:0007669"/>
    <property type="project" value="UniProtKB-KW"/>
</dbReference>
<dbReference type="GO" id="GO:0008963">
    <property type="term" value="F:phospho-N-acetylmuramoyl-pentapeptide-transferase activity"/>
    <property type="evidence" value="ECO:0007669"/>
    <property type="project" value="UniProtKB-UniRule"/>
</dbReference>
<dbReference type="GO" id="GO:0051992">
    <property type="term" value="F:UDP-N-acetylmuramoyl-L-alanyl-D-glutamyl-meso-2,6-diaminopimelyl-D-alanyl-D-alanine:undecaprenyl-phosphate transferase activity"/>
    <property type="evidence" value="ECO:0007669"/>
    <property type="project" value="RHEA"/>
</dbReference>
<dbReference type="GO" id="GO:0051301">
    <property type="term" value="P:cell division"/>
    <property type="evidence" value="ECO:0007669"/>
    <property type="project" value="UniProtKB-KW"/>
</dbReference>
<dbReference type="GO" id="GO:0071555">
    <property type="term" value="P:cell wall organization"/>
    <property type="evidence" value="ECO:0007669"/>
    <property type="project" value="UniProtKB-KW"/>
</dbReference>
<dbReference type="GO" id="GO:0009252">
    <property type="term" value="P:peptidoglycan biosynthetic process"/>
    <property type="evidence" value="ECO:0007669"/>
    <property type="project" value="UniProtKB-UniRule"/>
</dbReference>
<dbReference type="GO" id="GO:0008360">
    <property type="term" value="P:regulation of cell shape"/>
    <property type="evidence" value="ECO:0007669"/>
    <property type="project" value="UniProtKB-KW"/>
</dbReference>
<dbReference type="CDD" id="cd06852">
    <property type="entry name" value="GT_MraY"/>
    <property type="match status" value="1"/>
</dbReference>
<dbReference type="HAMAP" id="MF_00038">
    <property type="entry name" value="MraY"/>
    <property type="match status" value="1"/>
</dbReference>
<dbReference type="InterPro" id="IPR000715">
    <property type="entry name" value="Glycosyl_transferase_4"/>
</dbReference>
<dbReference type="InterPro" id="IPR003524">
    <property type="entry name" value="PNAcMuramoyl-5peptid_Trfase"/>
</dbReference>
<dbReference type="InterPro" id="IPR018480">
    <property type="entry name" value="PNAcMuramoyl-5peptid_Trfase_CS"/>
</dbReference>
<dbReference type="NCBIfam" id="TIGR00445">
    <property type="entry name" value="mraY"/>
    <property type="match status" value="1"/>
</dbReference>
<dbReference type="PANTHER" id="PTHR22926">
    <property type="entry name" value="PHOSPHO-N-ACETYLMURAMOYL-PENTAPEPTIDE-TRANSFERASE"/>
    <property type="match status" value="1"/>
</dbReference>
<dbReference type="PANTHER" id="PTHR22926:SF5">
    <property type="entry name" value="PHOSPHO-N-ACETYLMURAMOYL-PENTAPEPTIDE-TRANSFERASE HOMOLOG"/>
    <property type="match status" value="1"/>
</dbReference>
<dbReference type="Pfam" id="PF00953">
    <property type="entry name" value="Glycos_transf_4"/>
    <property type="match status" value="1"/>
</dbReference>
<dbReference type="Pfam" id="PF10555">
    <property type="entry name" value="MraY_sig1"/>
    <property type="match status" value="1"/>
</dbReference>
<dbReference type="PROSITE" id="PS01347">
    <property type="entry name" value="MRAY_1"/>
    <property type="match status" value="1"/>
</dbReference>
<dbReference type="PROSITE" id="PS01348">
    <property type="entry name" value="MRAY_2"/>
    <property type="match status" value="1"/>
</dbReference>
<organism>
    <name type="scientific">Mycobacterium leprae (strain TN)</name>
    <dbReference type="NCBI Taxonomy" id="272631"/>
    <lineage>
        <taxon>Bacteria</taxon>
        <taxon>Bacillati</taxon>
        <taxon>Actinomycetota</taxon>
        <taxon>Actinomycetes</taxon>
        <taxon>Mycobacteriales</taxon>
        <taxon>Mycobacteriaceae</taxon>
        <taxon>Mycobacterium</taxon>
    </lineage>
</organism>
<proteinExistence type="inferred from homology"/>